<dbReference type="EC" id="4.2.1.109" evidence="1"/>
<dbReference type="EMBL" id="KN294012">
    <property type="protein sequence ID" value="EEH36620.1"/>
    <property type="molecule type" value="Genomic_DNA"/>
</dbReference>
<dbReference type="RefSeq" id="XP_002791127.1">
    <property type="nucleotide sequence ID" value="XM_002791081.2"/>
</dbReference>
<dbReference type="SMR" id="C1H861"/>
<dbReference type="STRING" id="502779.C1H861"/>
<dbReference type="GeneID" id="9094401"/>
<dbReference type="KEGG" id="pbl:PAAG_07038"/>
<dbReference type="VEuPathDB" id="FungiDB:PAAG_07038"/>
<dbReference type="eggNOG" id="KOG2631">
    <property type="taxonomic scope" value="Eukaryota"/>
</dbReference>
<dbReference type="HOGENOM" id="CLU_006033_4_0_1"/>
<dbReference type="OMA" id="WFPGTSG"/>
<dbReference type="OrthoDB" id="191080at2759"/>
<dbReference type="UniPathway" id="UPA00904">
    <property type="reaction ID" value="UER00875"/>
</dbReference>
<dbReference type="Proteomes" id="UP000002059">
    <property type="component" value="Partially assembled WGS sequence"/>
</dbReference>
<dbReference type="GO" id="GO:0005737">
    <property type="term" value="C:cytoplasm"/>
    <property type="evidence" value="ECO:0007669"/>
    <property type="project" value="UniProtKB-SubCell"/>
</dbReference>
<dbReference type="GO" id="GO:0046570">
    <property type="term" value="F:methylthioribulose 1-phosphate dehydratase activity"/>
    <property type="evidence" value="ECO:0007669"/>
    <property type="project" value="UniProtKB-UniRule"/>
</dbReference>
<dbReference type="GO" id="GO:0008270">
    <property type="term" value="F:zinc ion binding"/>
    <property type="evidence" value="ECO:0007669"/>
    <property type="project" value="UniProtKB-UniRule"/>
</dbReference>
<dbReference type="GO" id="GO:0019509">
    <property type="term" value="P:L-methionine salvage from methylthioadenosine"/>
    <property type="evidence" value="ECO:0007669"/>
    <property type="project" value="UniProtKB-UniRule"/>
</dbReference>
<dbReference type="FunFam" id="3.40.225.10:FF:000003">
    <property type="entry name" value="Methylthioribulose-1-phosphate dehydratase"/>
    <property type="match status" value="1"/>
</dbReference>
<dbReference type="Gene3D" id="3.40.225.10">
    <property type="entry name" value="Class II aldolase/adducin N-terminal domain"/>
    <property type="match status" value="1"/>
</dbReference>
<dbReference type="HAMAP" id="MF_03116">
    <property type="entry name" value="Salvage_MtnB_euk"/>
    <property type="match status" value="1"/>
</dbReference>
<dbReference type="InterPro" id="IPR001303">
    <property type="entry name" value="Aldolase_II/adducin_N"/>
</dbReference>
<dbReference type="InterPro" id="IPR036409">
    <property type="entry name" value="Aldolase_II/adducin_N_sf"/>
</dbReference>
<dbReference type="InterPro" id="IPR017714">
    <property type="entry name" value="MethylthioRu-1-P_deHdtase_MtnB"/>
</dbReference>
<dbReference type="InterPro" id="IPR027514">
    <property type="entry name" value="Salvage_MtnB_euk"/>
</dbReference>
<dbReference type="NCBIfam" id="TIGR03328">
    <property type="entry name" value="salvage_mtnB"/>
    <property type="match status" value="1"/>
</dbReference>
<dbReference type="PANTHER" id="PTHR10640">
    <property type="entry name" value="METHYLTHIORIBULOSE-1-PHOSPHATE DEHYDRATASE"/>
    <property type="match status" value="1"/>
</dbReference>
<dbReference type="PANTHER" id="PTHR10640:SF7">
    <property type="entry name" value="METHYLTHIORIBULOSE-1-PHOSPHATE DEHYDRATASE"/>
    <property type="match status" value="1"/>
</dbReference>
<dbReference type="Pfam" id="PF00596">
    <property type="entry name" value="Aldolase_II"/>
    <property type="match status" value="1"/>
</dbReference>
<dbReference type="SMART" id="SM01007">
    <property type="entry name" value="Aldolase_II"/>
    <property type="match status" value="1"/>
</dbReference>
<dbReference type="SUPFAM" id="SSF53639">
    <property type="entry name" value="AraD/HMP-PK domain-like"/>
    <property type="match status" value="1"/>
</dbReference>
<keyword id="KW-0028">Amino-acid biosynthesis</keyword>
<keyword id="KW-0963">Cytoplasm</keyword>
<keyword id="KW-0456">Lyase</keyword>
<keyword id="KW-0479">Metal-binding</keyword>
<keyword id="KW-0486">Methionine biosynthesis</keyword>
<keyword id="KW-1185">Reference proteome</keyword>
<keyword id="KW-0862">Zinc</keyword>
<evidence type="ECO:0000255" key="1">
    <source>
        <dbReference type="HAMAP-Rule" id="MF_03116"/>
    </source>
</evidence>
<reference key="1">
    <citation type="journal article" date="2011" name="PLoS Genet.">
        <title>Comparative genomic analysis of human fungal pathogens causing paracoccidioidomycosis.</title>
        <authorList>
            <person name="Desjardins C.A."/>
            <person name="Champion M.D."/>
            <person name="Holder J.W."/>
            <person name="Muszewska A."/>
            <person name="Goldberg J."/>
            <person name="Bailao A.M."/>
            <person name="Brigido M.M."/>
            <person name="Ferreira M.E."/>
            <person name="Garcia A.M."/>
            <person name="Grynberg M."/>
            <person name="Gujja S."/>
            <person name="Heiman D.I."/>
            <person name="Henn M.R."/>
            <person name="Kodira C.D."/>
            <person name="Leon-Narvaez H."/>
            <person name="Longo L.V.G."/>
            <person name="Ma L.-J."/>
            <person name="Malavazi I."/>
            <person name="Matsuo A.L."/>
            <person name="Morais F.V."/>
            <person name="Pereira M."/>
            <person name="Rodriguez-Brito S."/>
            <person name="Sakthikumar S."/>
            <person name="Salem-Izacc S.M."/>
            <person name="Sykes S.M."/>
            <person name="Teixeira M.M."/>
            <person name="Vallejo M.C."/>
            <person name="Walter M.E."/>
            <person name="Yandava C."/>
            <person name="Young S."/>
            <person name="Zeng Q."/>
            <person name="Zucker J."/>
            <person name="Felipe M.S."/>
            <person name="Goldman G.H."/>
            <person name="Haas B.J."/>
            <person name="McEwen J.G."/>
            <person name="Nino-Vega G."/>
            <person name="Puccia R."/>
            <person name="San-Blas G."/>
            <person name="Soares C.M."/>
            <person name="Birren B.W."/>
            <person name="Cuomo C.A."/>
        </authorList>
    </citation>
    <scope>NUCLEOTIDE SEQUENCE [LARGE SCALE GENOMIC DNA]</scope>
    <source>
        <strain>ATCC MYA-826 / Pb01</strain>
    </source>
</reference>
<feature type="chain" id="PRO_0000393834" description="Methylthioribulose-1-phosphate dehydratase">
    <location>
        <begin position="1"/>
        <end position="240"/>
    </location>
</feature>
<feature type="active site" description="Proton donor/acceptor" evidence="1">
    <location>
        <position position="145"/>
    </location>
</feature>
<feature type="binding site" evidence="1">
    <location>
        <position position="99"/>
    </location>
    <ligand>
        <name>substrate</name>
    </ligand>
</feature>
<feature type="binding site" evidence="1">
    <location>
        <position position="116"/>
    </location>
    <ligand>
        <name>Zn(2+)</name>
        <dbReference type="ChEBI" id="CHEBI:29105"/>
    </ligand>
</feature>
<feature type="binding site" evidence="1">
    <location>
        <position position="118"/>
    </location>
    <ligand>
        <name>Zn(2+)</name>
        <dbReference type="ChEBI" id="CHEBI:29105"/>
    </ligand>
</feature>
<feature type="binding site" evidence="1">
    <location>
        <position position="201"/>
    </location>
    <ligand>
        <name>Zn(2+)</name>
        <dbReference type="ChEBI" id="CHEBI:29105"/>
    </ligand>
</feature>
<protein>
    <recommendedName>
        <fullName evidence="1">Methylthioribulose-1-phosphate dehydratase</fullName>
        <shortName evidence="1">MTRu-1-P dehydratase</shortName>
        <ecNumber evidence="1">4.2.1.109</ecNumber>
    </recommendedName>
</protein>
<organism>
    <name type="scientific">Paracoccidioides lutzii (strain ATCC MYA-826 / Pb01)</name>
    <name type="common">Paracoccidioides brasiliensis</name>
    <dbReference type="NCBI Taxonomy" id="502779"/>
    <lineage>
        <taxon>Eukaryota</taxon>
        <taxon>Fungi</taxon>
        <taxon>Dikarya</taxon>
        <taxon>Ascomycota</taxon>
        <taxon>Pezizomycotina</taxon>
        <taxon>Eurotiomycetes</taxon>
        <taxon>Eurotiomycetidae</taxon>
        <taxon>Onygenales</taxon>
        <taxon>Ajellomycetaceae</taxon>
        <taxon>Paracoccidioides</taxon>
    </lineage>
</organism>
<name>MTNB_PARBA</name>
<sequence length="240" mass="26853">MSDIKDGNNDHLVQSDDPEHPANLIPALCRNFYSHGWVTGTGGGASIKRDNHIFIAPSGVQKELIQPHNIFVLSFPTPKYPPSARQYIRKPLKLNPSACTPLFLAAFERGAGCCIHTHSQWAVLVTLLVEREKGPEGCFEISNIEQIKGIPRGKGKGMMGFFDTLKIPIIENTAFEEDLTQSLEEAMEMYPDTYAVLVRRHGIYVWGDDVAKAKTQCESLDYLFQLAVEMHRLGLPWVKS</sequence>
<comment type="function">
    <text evidence="1">Catalyzes the dehydration of methylthioribulose-1-phosphate (MTRu-1-P) into 2,3-diketo-5-methylthiopentyl-1-phosphate (DK-MTP-1-P).</text>
</comment>
<comment type="catalytic activity">
    <reaction evidence="1">
        <text>5-(methylsulfanyl)-D-ribulose 1-phosphate = 5-methylsulfanyl-2,3-dioxopentyl phosphate + H2O</text>
        <dbReference type="Rhea" id="RHEA:15549"/>
        <dbReference type="ChEBI" id="CHEBI:15377"/>
        <dbReference type="ChEBI" id="CHEBI:58548"/>
        <dbReference type="ChEBI" id="CHEBI:58828"/>
        <dbReference type="EC" id="4.2.1.109"/>
    </reaction>
</comment>
<comment type="cofactor">
    <cofactor evidence="1">
        <name>Zn(2+)</name>
        <dbReference type="ChEBI" id="CHEBI:29105"/>
    </cofactor>
    <text evidence="1">Binds 1 zinc ion per subunit.</text>
</comment>
<comment type="pathway">
    <text evidence="1">Amino-acid biosynthesis; L-methionine biosynthesis via salvage pathway; L-methionine from S-methyl-5-thio-alpha-D-ribose 1-phosphate: step 2/6.</text>
</comment>
<comment type="subcellular location">
    <subcellularLocation>
        <location evidence="1">Cytoplasm</location>
    </subcellularLocation>
</comment>
<comment type="similarity">
    <text evidence="1">Belongs to the aldolase class II family. MtnB subfamily.</text>
</comment>
<gene>
    <name evidence="1" type="primary">MDE1</name>
    <name type="ORF">PAAG_07038</name>
</gene>
<proteinExistence type="inferred from homology"/>
<accession>C1H861</accession>